<reference key="1">
    <citation type="journal article" date="1990" name="Proc. Natl. Acad. Sci. U.S.A.">
        <title>Recombinant human DNase I reduces the viscosity of cystic fibrosis sputum.</title>
        <authorList>
            <person name="Shak S."/>
            <person name="Capon D.J."/>
            <person name="Hellmiss R."/>
            <person name="Marsters S.A."/>
            <person name="Baker C.L."/>
        </authorList>
    </citation>
    <scope>NUCLEOTIDE SEQUENCE [MRNA] (ISOFORM 1)</scope>
    <scope>FUNCTION</scope>
    <scope>CATALYTIC ACTIVITY</scope>
</reference>
<reference key="2">
    <citation type="journal article" date="1995" name="Ann. Hum. Genet.">
        <title>Structure of the human deoxyribonuclease I (DNase I) gene: identification of the nucleotide substitution that generates its classical genetic polymorphism.</title>
        <authorList>
            <person name="Yasuda T."/>
            <person name="Kishi K."/>
            <person name="Yanagawa Y."/>
            <person name="Yoshida A."/>
        </authorList>
    </citation>
    <scope>NUCLEOTIDE SEQUENCE [GENOMIC DNA]</scope>
    <scope>VARIANT GLN-244</scope>
    <source>
        <tissue>Placenta</tissue>
    </source>
</reference>
<reference key="3">
    <citation type="journal article" date="2001" name="Eur. J. Immunol.">
        <title>DNase I mediates internucleosomal DNA degradation in human cells undergoing drug-induced apoptosis.</title>
        <authorList>
            <person name="Oliveri M."/>
            <person name="Daga A."/>
            <person name="Cantoni C."/>
            <person name="Lunardi C."/>
            <person name="Millo R."/>
            <person name="Puccetti A."/>
        </authorList>
    </citation>
    <scope>NUCLEOTIDE SEQUENCE [MRNA] (ISOFORM 1)</scope>
    <scope>FUNCTION</scope>
    <scope>CATALYTIC ACTIVITY</scope>
    <scope>COFACTOR</scope>
</reference>
<reference key="4">
    <citation type="journal article" date="2006" name="FEBS J.">
        <title>Characterization of human deoxyribonuclease I gene (DNASE1) promoters reveals the utilization of two transcription-starting exons and the involvement of Sp1 in its transcriptional regulation.</title>
        <authorList>
            <person name="Kominato Y."/>
            <person name="Ueki M."/>
            <person name="Iida R."/>
            <person name="Kawai Y."/>
            <person name="Nakajima T."/>
            <person name="Makita C."/>
            <person name="Itoi M."/>
            <person name="Tajima Y."/>
            <person name="Kishi K."/>
            <person name="Yasuda T."/>
        </authorList>
    </citation>
    <scope>NUCLEOTIDE SEQUENCE [MRNA] (ISOFORM 1)</scope>
    <source>
        <tissue>Pancreas</tissue>
    </source>
</reference>
<reference key="5">
    <citation type="journal article" date="2004" name="Nat. Genet.">
        <title>Complete sequencing and characterization of 21,243 full-length human cDNAs.</title>
        <authorList>
            <person name="Ota T."/>
            <person name="Suzuki Y."/>
            <person name="Nishikawa T."/>
            <person name="Otsuki T."/>
            <person name="Sugiyama T."/>
            <person name="Irie R."/>
            <person name="Wakamatsu A."/>
            <person name="Hayashi K."/>
            <person name="Sato H."/>
            <person name="Nagai K."/>
            <person name="Kimura K."/>
            <person name="Makita H."/>
            <person name="Sekine M."/>
            <person name="Obayashi M."/>
            <person name="Nishi T."/>
            <person name="Shibahara T."/>
            <person name="Tanaka T."/>
            <person name="Ishii S."/>
            <person name="Yamamoto J."/>
            <person name="Saito K."/>
            <person name="Kawai Y."/>
            <person name="Isono Y."/>
            <person name="Nakamura Y."/>
            <person name="Nagahari K."/>
            <person name="Murakami K."/>
            <person name="Yasuda T."/>
            <person name="Iwayanagi T."/>
            <person name="Wagatsuma M."/>
            <person name="Shiratori A."/>
            <person name="Sudo H."/>
            <person name="Hosoiri T."/>
            <person name="Kaku Y."/>
            <person name="Kodaira H."/>
            <person name="Kondo H."/>
            <person name="Sugawara M."/>
            <person name="Takahashi M."/>
            <person name="Kanda K."/>
            <person name="Yokoi T."/>
            <person name="Furuya T."/>
            <person name="Kikkawa E."/>
            <person name="Omura Y."/>
            <person name="Abe K."/>
            <person name="Kamihara K."/>
            <person name="Katsuta N."/>
            <person name="Sato K."/>
            <person name="Tanikawa M."/>
            <person name="Yamazaki M."/>
            <person name="Ninomiya K."/>
            <person name="Ishibashi T."/>
            <person name="Yamashita H."/>
            <person name="Murakawa K."/>
            <person name="Fujimori K."/>
            <person name="Tanai H."/>
            <person name="Kimata M."/>
            <person name="Watanabe M."/>
            <person name="Hiraoka S."/>
            <person name="Chiba Y."/>
            <person name="Ishida S."/>
            <person name="Ono Y."/>
            <person name="Takiguchi S."/>
            <person name="Watanabe S."/>
            <person name="Yosida M."/>
            <person name="Hotuta T."/>
            <person name="Kusano J."/>
            <person name="Kanehori K."/>
            <person name="Takahashi-Fujii A."/>
            <person name="Hara H."/>
            <person name="Tanase T.-O."/>
            <person name="Nomura Y."/>
            <person name="Togiya S."/>
            <person name="Komai F."/>
            <person name="Hara R."/>
            <person name="Takeuchi K."/>
            <person name="Arita M."/>
            <person name="Imose N."/>
            <person name="Musashino K."/>
            <person name="Yuuki H."/>
            <person name="Oshima A."/>
            <person name="Sasaki N."/>
            <person name="Aotsuka S."/>
            <person name="Yoshikawa Y."/>
            <person name="Matsunawa H."/>
            <person name="Ichihara T."/>
            <person name="Shiohata N."/>
            <person name="Sano S."/>
            <person name="Moriya S."/>
            <person name="Momiyama H."/>
            <person name="Satoh N."/>
            <person name="Takami S."/>
            <person name="Terashima Y."/>
            <person name="Suzuki O."/>
            <person name="Nakagawa S."/>
            <person name="Senoh A."/>
            <person name="Mizoguchi H."/>
            <person name="Goto Y."/>
            <person name="Shimizu F."/>
            <person name="Wakebe H."/>
            <person name="Hishigaki H."/>
            <person name="Watanabe T."/>
            <person name="Sugiyama A."/>
            <person name="Takemoto M."/>
            <person name="Kawakami B."/>
            <person name="Yamazaki M."/>
            <person name="Watanabe K."/>
            <person name="Kumagai A."/>
            <person name="Itakura S."/>
            <person name="Fukuzumi Y."/>
            <person name="Fujimori Y."/>
            <person name="Komiyama M."/>
            <person name="Tashiro H."/>
            <person name="Tanigami A."/>
            <person name="Fujiwara T."/>
            <person name="Ono T."/>
            <person name="Yamada K."/>
            <person name="Fujii Y."/>
            <person name="Ozaki K."/>
            <person name="Hirao M."/>
            <person name="Ohmori Y."/>
            <person name="Kawabata A."/>
            <person name="Hikiji T."/>
            <person name="Kobatake N."/>
            <person name="Inagaki H."/>
            <person name="Ikema Y."/>
            <person name="Okamoto S."/>
            <person name="Okitani R."/>
            <person name="Kawakami T."/>
            <person name="Noguchi S."/>
            <person name="Itoh T."/>
            <person name="Shigeta K."/>
            <person name="Senba T."/>
            <person name="Matsumura K."/>
            <person name="Nakajima Y."/>
            <person name="Mizuno T."/>
            <person name="Morinaga M."/>
            <person name="Sasaki M."/>
            <person name="Togashi T."/>
            <person name="Oyama M."/>
            <person name="Hata H."/>
            <person name="Watanabe M."/>
            <person name="Komatsu T."/>
            <person name="Mizushima-Sugano J."/>
            <person name="Satoh T."/>
            <person name="Shirai Y."/>
            <person name="Takahashi Y."/>
            <person name="Nakagawa K."/>
            <person name="Okumura K."/>
            <person name="Nagase T."/>
            <person name="Nomura N."/>
            <person name="Kikuchi H."/>
            <person name="Masuho Y."/>
            <person name="Yamashita R."/>
            <person name="Nakai K."/>
            <person name="Yada T."/>
            <person name="Nakamura Y."/>
            <person name="Ohara O."/>
            <person name="Isogai T."/>
            <person name="Sugano S."/>
        </authorList>
    </citation>
    <scope>NUCLEOTIDE SEQUENCE [LARGE SCALE MRNA] (ISOFORM 2)</scope>
    <source>
        <tissue>Small intestine</tissue>
    </source>
</reference>
<reference key="6">
    <citation type="journal article" date="2004" name="Nature">
        <title>The sequence and analysis of duplication-rich human chromosome 16.</title>
        <authorList>
            <person name="Martin J."/>
            <person name="Han C."/>
            <person name="Gordon L.A."/>
            <person name="Terry A."/>
            <person name="Prabhakar S."/>
            <person name="She X."/>
            <person name="Xie G."/>
            <person name="Hellsten U."/>
            <person name="Chan Y.M."/>
            <person name="Altherr M."/>
            <person name="Couronne O."/>
            <person name="Aerts A."/>
            <person name="Bajorek E."/>
            <person name="Black S."/>
            <person name="Blumer H."/>
            <person name="Branscomb E."/>
            <person name="Brown N.C."/>
            <person name="Bruno W.J."/>
            <person name="Buckingham J.M."/>
            <person name="Callen D.F."/>
            <person name="Campbell C.S."/>
            <person name="Campbell M.L."/>
            <person name="Campbell E.W."/>
            <person name="Caoile C."/>
            <person name="Challacombe J.F."/>
            <person name="Chasteen L.A."/>
            <person name="Chertkov O."/>
            <person name="Chi H.C."/>
            <person name="Christensen M."/>
            <person name="Clark L.M."/>
            <person name="Cohn J.D."/>
            <person name="Denys M."/>
            <person name="Detter J.C."/>
            <person name="Dickson M."/>
            <person name="Dimitrijevic-Bussod M."/>
            <person name="Escobar J."/>
            <person name="Fawcett J.J."/>
            <person name="Flowers D."/>
            <person name="Fotopulos D."/>
            <person name="Glavina T."/>
            <person name="Gomez M."/>
            <person name="Gonzales E."/>
            <person name="Goodstein D."/>
            <person name="Goodwin L.A."/>
            <person name="Grady D.L."/>
            <person name="Grigoriev I."/>
            <person name="Groza M."/>
            <person name="Hammon N."/>
            <person name="Hawkins T."/>
            <person name="Haydu L."/>
            <person name="Hildebrand C.E."/>
            <person name="Huang W."/>
            <person name="Israni S."/>
            <person name="Jett J."/>
            <person name="Jewett P.B."/>
            <person name="Kadner K."/>
            <person name="Kimball H."/>
            <person name="Kobayashi A."/>
            <person name="Krawczyk M.-C."/>
            <person name="Leyba T."/>
            <person name="Longmire J.L."/>
            <person name="Lopez F."/>
            <person name="Lou Y."/>
            <person name="Lowry S."/>
            <person name="Ludeman T."/>
            <person name="Manohar C.F."/>
            <person name="Mark G.A."/>
            <person name="McMurray K.L."/>
            <person name="Meincke L.J."/>
            <person name="Morgan J."/>
            <person name="Moyzis R.K."/>
            <person name="Mundt M.O."/>
            <person name="Munk A.C."/>
            <person name="Nandkeshwar R.D."/>
            <person name="Pitluck S."/>
            <person name="Pollard M."/>
            <person name="Predki P."/>
            <person name="Parson-Quintana B."/>
            <person name="Ramirez L."/>
            <person name="Rash S."/>
            <person name="Retterer J."/>
            <person name="Ricke D.O."/>
            <person name="Robinson D.L."/>
            <person name="Rodriguez A."/>
            <person name="Salamov A."/>
            <person name="Saunders E.H."/>
            <person name="Scott D."/>
            <person name="Shough T."/>
            <person name="Stallings R.L."/>
            <person name="Stalvey M."/>
            <person name="Sutherland R.D."/>
            <person name="Tapia R."/>
            <person name="Tesmer J.G."/>
            <person name="Thayer N."/>
            <person name="Thompson L.S."/>
            <person name="Tice H."/>
            <person name="Torney D.C."/>
            <person name="Tran-Gyamfi M."/>
            <person name="Tsai M."/>
            <person name="Ulanovsky L.E."/>
            <person name="Ustaszewska A."/>
            <person name="Vo N."/>
            <person name="White P.S."/>
            <person name="Williams A.L."/>
            <person name="Wills P.L."/>
            <person name="Wu J.-R."/>
            <person name="Wu K."/>
            <person name="Yang J."/>
            <person name="DeJong P."/>
            <person name="Bruce D."/>
            <person name="Doggett N.A."/>
            <person name="Deaven L."/>
            <person name="Schmutz J."/>
            <person name="Grimwood J."/>
            <person name="Richardson P."/>
            <person name="Rokhsar D.S."/>
            <person name="Eichler E.E."/>
            <person name="Gilna P."/>
            <person name="Lucas S.M."/>
            <person name="Myers R.M."/>
            <person name="Rubin E.M."/>
            <person name="Pennacchio L.A."/>
        </authorList>
    </citation>
    <scope>NUCLEOTIDE SEQUENCE [LARGE SCALE GENOMIC DNA]</scope>
</reference>
<reference key="7">
    <citation type="submission" date="2005-09" db="EMBL/GenBank/DDBJ databases">
        <authorList>
            <person name="Mural R.J."/>
            <person name="Istrail S."/>
            <person name="Sutton G."/>
            <person name="Florea L."/>
            <person name="Halpern A.L."/>
            <person name="Mobarry C.M."/>
            <person name="Lippert R."/>
            <person name="Walenz B."/>
            <person name="Shatkay H."/>
            <person name="Dew I."/>
            <person name="Miller J.R."/>
            <person name="Flanigan M.J."/>
            <person name="Edwards N.J."/>
            <person name="Bolanos R."/>
            <person name="Fasulo D."/>
            <person name="Halldorsson B.V."/>
            <person name="Hannenhalli S."/>
            <person name="Turner R."/>
            <person name="Yooseph S."/>
            <person name="Lu F."/>
            <person name="Nusskern D.R."/>
            <person name="Shue B.C."/>
            <person name="Zheng X.H."/>
            <person name="Zhong F."/>
            <person name="Delcher A.L."/>
            <person name="Huson D.H."/>
            <person name="Kravitz S.A."/>
            <person name="Mouchard L."/>
            <person name="Reinert K."/>
            <person name="Remington K.A."/>
            <person name="Clark A.G."/>
            <person name="Waterman M.S."/>
            <person name="Eichler E.E."/>
            <person name="Adams M.D."/>
            <person name="Hunkapiller M.W."/>
            <person name="Myers E.W."/>
            <person name="Venter J.C."/>
        </authorList>
    </citation>
    <scope>NUCLEOTIDE SEQUENCE [LARGE SCALE GENOMIC DNA]</scope>
</reference>
<reference key="8">
    <citation type="journal article" date="2004" name="Genome Res.">
        <title>The status, quality, and expansion of the NIH full-length cDNA project: the Mammalian Gene Collection (MGC).</title>
        <authorList>
            <consortium name="The MGC Project Team"/>
        </authorList>
    </citation>
    <scope>NUCLEOTIDE SEQUENCE [LARGE SCALE MRNA] (ISOFORM 1)</scope>
    <source>
        <tissue>Kidney</tissue>
    </source>
</reference>
<reference key="9">
    <citation type="journal article" date="1988" name="J. Exp. Med.">
        <title>A human urine-derived interleukin 1 inhibitor. Homology with deoxyribonuclease I.</title>
        <authorList>
            <person name="Rosenstreich D.L."/>
            <person name="Tu J.H."/>
            <person name="Kinkade P.R."/>
            <person name="Maurer-Fogy I."/>
            <person name="Kahn J."/>
            <person name="Barton R.W."/>
            <person name="Farina P.R."/>
        </authorList>
    </citation>
    <scope>PROTEIN SEQUENCE OF 23-45 AND 73-95</scope>
    <source>
        <tissue>Urine</tissue>
    </source>
</reference>
<reference key="10">
    <citation type="journal article" date="1990" name="J. Biochem.">
        <title>Human genetically polymorphic deoxyribonuclease: purification, characterization, and multiplicity of urine deoxyribonuclease I.</title>
        <authorList>
            <person name="Yasuda T."/>
            <person name="Awazu S."/>
            <person name="Sato W."/>
            <person name="Iida R."/>
            <person name="Tanaka Y."/>
            <person name="Kishi K."/>
        </authorList>
    </citation>
    <scope>PROTEIN SEQUENCE OF 23-49</scope>
    <scope>FUNCTION</scope>
    <scope>CATALYTIC ACTIVITY</scope>
    <scope>SUBCELLULAR LOCATION</scope>
    <scope>COFACTOR</scope>
    <scope>GLYCOSYLATION AT ASN-40</scope>
    <source>
        <tissue>Urine</tissue>
    </source>
</reference>
<reference key="11">
    <citation type="journal article" date="2001" name="Nat. Genet.">
        <title>Mutation of DNASE1 in people with systemic lupus erythematosus.</title>
        <authorList>
            <person name="Yasutomo K."/>
            <person name="Horiuchi T."/>
            <person name="Kagami S."/>
            <person name="Tsukamoto H."/>
            <person name="Hashimura C."/>
            <person name="Urushihara M."/>
            <person name="Kuroda Y."/>
        </authorList>
    </citation>
    <scope>INVOLVEMENT IN SLE</scope>
</reference>
<reference key="12">
    <citation type="journal article" date="2010" name="Proc. Natl. Acad. Sci. U.S.A.">
        <title>Impairment of neutrophil extracellular trap degradation is associated with lupus nephritis.</title>
        <authorList>
            <person name="Hakkim A."/>
            <person name="Fuernrohr B.G."/>
            <person name="Amann K."/>
            <person name="Laube B."/>
            <person name="Abed U.A."/>
            <person name="Brinkmann V."/>
            <person name="Herrmann M."/>
            <person name="Voll R.E."/>
            <person name="Zychlinsky A."/>
        </authorList>
    </citation>
    <scope>INVOLVEMENT IN SLE</scope>
</reference>
<reference key="13">
    <citation type="journal article" date="1995" name="Ann. Hum. Genet.">
        <title>Molecular analysis of the third allele of human deoxyribonuclease I polymorphism.</title>
        <authorList>
            <person name="Yasuda T."/>
            <person name="Nadano D."/>
            <person name="Takeshita H."/>
            <person name="Tenjo E."/>
            <person name="Kishi K."/>
        </authorList>
    </citation>
    <scope>VARIANT ALA-154</scope>
</reference>
<reference key="14">
    <citation type="journal article" date="1995" name="FEBS Lett.">
        <title>The molecular basis for genetic polymorphism of human deoxyribonuclease I: identification of the nucleotide substitution that generates the fourth allele.</title>
        <authorList>
            <person name="Yasuda T."/>
            <person name="Nadano D."/>
            <person name="Takeshita H."/>
            <person name="Tenjo E."/>
            <person name="Sawazaki K."/>
            <person name="Ootani M."/>
            <person name="Kishi K."/>
        </authorList>
    </citation>
    <scope>VARIANT GLU-31</scope>
</reference>
<reference key="15">
    <citation type="journal article" date="1997" name="Electrophoresis">
        <title>The fifth allele of the human deoxyribonuclease I (DNase I) polymorphism.</title>
        <authorList>
            <person name="Iida R."/>
            <person name="Yasuda T."/>
            <person name="Aoyama M."/>
            <person name="Tsubota E."/>
            <person name="Kobayashi M."/>
            <person name="Yuasa I."/>
            <person name="Matsuki T."/>
            <person name="Kishi K."/>
        </authorList>
    </citation>
    <scope>VARIANT MET-114</scope>
</reference>
<reference key="16">
    <citation type="journal article" date="1999" name="Biochem. Biophys. Res. Commun.">
        <title>A new allele, DNASE1*6, of human deoxyribonuclease I polymorphism encodes an Arg to Cys substitution responsible for its instability.</title>
        <authorList>
            <person name="Yasuda T."/>
            <person name="Takeshita H."/>
            <person name="Iida R."/>
            <person name="Kogure S."/>
            <person name="Kishi K."/>
        </authorList>
    </citation>
    <scope>VARIANT CYS-207</scope>
</reference>
<protein>
    <recommendedName>
        <fullName>Deoxyribonuclease-1</fullName>
        <ecNumber evidence="6 9 10">3.1.21.1</ecNumber>
    </recommendedName>
    <alternativeName>
        <fullName>Deoxyribonuclease I</fullName>
        <shortName>DNase I</shortName>
    </alternativeName>
    <innName>Dornase alfa</innName>
</protein>
<name>DNAS1_HUMAN</name>
<feature type="signal peptide" evidence="10 11">
    <location>
        <begin position="1"/>
        <end position="22"/>
    </location>
</feature>
<feature type="chain" id="PRO_0000007277" description="Deoxyribonuclease-1">
    <location>
        <begin position="23"/>
        <end position="282"/>
    </location>
</feature>
<feature type="active site" evidence="1">
    <location>
        <position position="100"/>
    </location>
</feature>
<feature type="active site" evidence="1">
    <location>
        <position position="156"/>
    </location>
</feature>
<feature type="site" description="Involved in actin-binding" evidence="1">
    <location>
        <position position="35"/>
    </location>
</feature>
<feature type="site" description="Nitration by tetranitromethane destroys a Ca(2+) binding site and inactivates enzyme" evidence="1">
    <location>
        <position position="87"/>
    </location>
</feature>
<feature type="site" description="Involved in actin-binding" evidence="1">
    <location>
        <position position="89"/>
    </location>
</feature>
<feature type="glycosylation site" description="N-linked (GlcNAc...) asparagine" evidence="10">
    <location>
        <position position="40"/>
    </location>
</feature>
<feature type="glycosylation site" description="N-linked (GlcNAc...) asparagine" evidence="4">
    <location>
        <position position="128"/>
    </location>
</feature>
<feature type="disulfide bond" evidence="1">
    <location>
        <begin position="123"/>
        <end position="126"/>
    </location>
</feature>
<feature type="disulfide bond" description="Essential for enzymatic activity" evidence="1">
    <location>
        <begin position="195"/>
        <end position="231"/>
    </location>
</feature>
<feature type="splice variant" id="VSP_056974" description="In isoform 2." evidence="16">
    <original>MRGMKLLGALLALAALLQGAVSLKIAAFNIQTFGETKMSNATLVSYIVQILSRYDIALVQEVRDSH</original>
    <variation>MHQTPITTWSVSHWDGTAIRSATCSCTGLTRCLRWTATTTMMAASPAGTTPSTESQPLSGSSPGSQ</variation>
    <location>
        <begin position="1"/>
        <end position="66"/>
    </location>
</feature>
<feature type="splice variant" id="VSP_056975" description="In isoform 2." evidence="16">
    <location>
        <begin position="67"/>
        <end position="183"/>
    </location>
</feature>
<feature type="splice variant" id="VSP_056976" description="In isoform 2." evidence="16">
    <original>AQAISDHYPVEVMLK</original>
    <variation>FSVHTCSGAGLGERHGLPASAALPSNTCRAGTHRVST</variation>
    <location>
        <begin position="268"/>
        <end position="282"/>
    </location>
</feature>
<feature type="sequence variant" id="VAR_024434" description="In dbSNP:rs8176927.">
    <original>R</original>
    <variation>S</variation>
    <location>
        <position position="2"/>
    </location>
</feature>
<feature type="sequence variant" id="VAR_002264" description="In allele DNASE1*4; dbSNP:rs77254040." evidence="14">
    <original>Q</original>
    <variation>E</variation>
    <location>
        <position position="31"/>
    </location>
</feature>
<feature type="sequence variant" id="VAR_029172" description="In dbSNP:rs8176928.">
    <original>R</original>
    <variation>G</variation>
    <location>
        <position position="107"/>
    </location>
</feature>
<feature type="sequence variant" id="VAR_009300" description="In allele DNASE1*5; dbSNP:rs530214101." evidence="15">
    <original>V</original>
    <variation>M</variation>
    <location>
        <position position="114"/>
    </location>
</feature>
<feature type="sequence variant" id="VAR_024435" description="In dbSNP:rs8176919.">
    <original>G</original>
    <variation>R</variation>
    <location>
        <position position="127"/>
    </location>
</feature>
<feature type="sequence variant" id="VAR_002265" description="In allele DNASE1*3; dbSNP:rs1799891." evidence="12">
    <original>P</original>
    <variation>A</variation>
    <location>
        <position position="154"/>
    </location>
</feature>
<feature type="sequence variant" id="VAR_009301" description="In allele DNASE1*6; dbSNP:rs148373909." evidence="5">
    <original>R</original>
    <variation>C</variation>
    <location>
        <position position="207"/>
    </location>
</feature>
<feature type="sequence variant" id="VAR_029173" description="In dbSNP:rs8176940.">
    <original>C</original>
    <variation>Y</variation>
    <location>
        <position position="231"/>
    </location>
</feature>
<feature type="sequence variant" id="VAR_002266" description="In allele DNASE1*1; dbSNP:rs1053874." evidence="13">
    <original>R</original>
    <variation>Q</variation>
    <location>
        <position position="244"/>
    </location>
</feature>
<feature type="sequence variant" id="VAR_029174" description="In dbSNP:rs8176939.">
    <original>A</original>
    <variation>P</variation>
    <location>
        <position position="246"/>
    </location>
</feature>
<feature type="sequence variant" id="VAR_029175" description="In dbSNP:rs8176924.">
    <original>G</original>
    <variation>D</variation>
    <location>
        <position position="262"/>
    </location>
</feature>
<feature type="sequence conflict" description="In Ref. 4; BAE96964." evidence="17" ref="4">
    <original>R</original>
    <variation>Q</variation>
    <location>
        <position position="143"/>
    </location>
</feature>
<feature type="strand" evidence="20">
    <location>
        <begin position="24"/>
        <end position="34"/>
    </location>
</feature>
<feature type="helix" evidence="20">
    <location>
        <begin position="35"/>
        <end position="38"/>
    </location>
</feature>
<feature type="helix" evidence="20">
    <location>
        <begin position="41"/>
        <end position="51"/>
    </location>
</feature>
<feature type="strand" evidence="20">
    <location>
        <begin position="55"/>
        <end position="62"/>
    </location>
</feature>
<feature type="helix" evidence="20">
    <location>
        <begin position="68"/>
        <end position="77"/>
    </location>
</feature>
<feature type="turn" evidence="20">
    <location>
        <begin position="78"/>
        <end position="80"/>
    </location>
</feature>
<feature type="strand" evidence="20">
    <location>
        <begin position="86"/>
        <end position="89"/>
    </location>
</feature>
<feature type="strand" evidence="20">
    <location>
        <begin position="93"/>
        <end position="98"/>
    </location>
</feature>
<feature type="strand" evidence="20">
    <location>
        <begin position="100"/>
        <end position="106"/>
    </location>
</feature>
<feature type="turn" evidence="20">
    <location>
        <begin position="108"/>
        <end position="110"/>
    </location>
</feature>
<feature type="strand" evidence="20">
    <location>
        <begin position="112"/>
        <end position="118"/>
    </location>
</feature>
<feature type="turn" evidence="20">
    <location>
        <begin position="124"/>
        <end position="127"/>
    </location>
</feature>
<feature type="strand" evidence="20">
    <location>
        <begin position="136"/>
        <end position="141"/>
    </location>
</feature>
<feature type="strand" evidence="20">
    <location>
        <begin position="149"/>
        <end position="154"/>
    </location>
</feature>
<feature type="helix" evidence="20">
    <location>
        <begin position="159"/>
        <end position="161"/>
    </location>
</feature>
<feature type="helix" evidence="20">
    <location>
        <begin position="162"/>
        <end position="180"/>
    </location>
</feature>
<feature type="strand" evidence="20">
    <location>
        <begin position="185"/>
        <end position="190"/>
    </location>
</feature>
<feature type="turn" evidence="20">
    <location>
        <begin position="195"/>
        <end position="197"/>
    </location>
</feature>
<feature type="helix" evidence="20">
    <location>
        <begin position="200"/>
        <end position="205"/>
    </location>
</feature>
<feature type="helix" evidence="20">
    <location>
        <begin position="207"/>
        <end position="210"/>
    </location>
</feature>
<feature type="strand" evidence="20">
    <location>
        <begin position="214"/>
        <end position="216"/>
    </location>
</feature>
<feature type="strand" evidence="20">
    <location>
        <begin position="225"/>
        <end position="228"/>
    </location>
</feature>
<feature type="strand" evidence="20">
    <location>
        <begin position="234"/>
        <end position="240"/>
    </location>
</feature>
<feature type="helix" evidence="20">
    <location>
        <begin position="241"/>
        <end position="246"/>
    </location>
</feature>
<feature type="helix" evidence="20">
    <location>
        <begin position="257"/>
        <end position="260"/>
    </location>
</feature>
<feature type="helix" evidence="20">
    <location>
        <begin position="265"/>
        <end position="271"/>
    </location>
</feature>
<feature type="strand" evidence="20">
    <location>
        <begin position="277"/>
        <end position="281"/>
    </location>
</feature>
<sequence length="282" mass="31434">MRGMKLLGALLALAALLQGAVSLKIAAFNIQTFGETKMSNATLVSYIVQILSRYDIALVQEVRDSHLTAVGKLLDNLNQDAPDTYHYVVSEPLGRNSYKERYLFVYRPDQVSAVDSYYYDDGCEPCGNDTFNREPAIVRFFSRFTEVREFAIVPLHAAPGDAVAEIDALYDVYLDVQEKWGLEDVMLMGDFNAGCSYVRPSQWSSIRLWTSPTFQWLIPDSADTTATPTHCAYDRIVVAGMLLRGAVVPDSALPFNFQAAYGLSDQLAQAISDHYPVEVMLK</sequence>
<organism>
    <name type="scientific">Homo sapiens</name>
    <name type="common">Human</name>
    <dbReference type="NCBI Taxonomy" id="9606"/>
    <lineage>
        <taxon>Eukaryota</taxon>
        <taxon>Metazoa</taxon>
        <taxon>Chordata</taxon>
        <taxon>Craniata</taxon>
        <taxon>Vertebrata</taxon>
        <taxon>Euteleostomi</taxon>
        <taxon>Mammalia</taxon>
        <taxon>Eutheria</taxon>
        <taxon>Euarchontoglires</taxon>
        <taxon>Primates</taxon>
        <taxon>Haplorrhini</taxon>
        <taxon>Catarrhini</taxon>
        <taxon>Hominidae</taxon>
        <taxon>Homo</taxon>
    </lineage>
</organism>
<proteinExistence type="evidence at protein level"/>
<dbReference type="EC" id="3.1.21.1" evidence="6 9 10"/>
<dbReference type="EMBL" id="M55983">
    <property type="protein sequence ID" value="AAA63170.1"/>
    <property type="molecule type" value="mRNA"/>
</dbReference>
<dbReference type="EMBL" id="D83195">
    <property type="protein sequence ID" value="BAA11841.1"/>
    <property type="molecule type" value="Genomic_DNA"/>
</dbReference>
<dbReference type="EMBL" id="AJ298844">
    <property type="protein sequence ID" value="CAC12813.1"/>
    <property type="molecule type" value="mRNA"/>
</dbReference>
<dbReference type="EMBL" id="AB188151">
    <property type="protein sequence ID" value="BAE96964.1"/>
    <property type="molecule type" value="mRNA"/>
</dbReference>
<dbReference type="EMBL" id="AB188152">
    <property type="protein sequence ID" value="BAE96965.1"/>
    <property type="molecule type" value="mRNA"/>
</dbReference>
<dbReference type="EMBL" id="AK300914">
    <property type="protein sequence ID" value="BAG62547.1"/>
    <property type="molecule type" value="mRNA"/>
</dbReference>
<dbReference type="EMBL" id="AC005203">
    <property type="protein sequence ID" value="AAC24721.1"/>
    <property type="molecule type" value="Genomic_DNA"/>
</dbReference>
<dbReference type="EMBL" id="AC006111">
    <property type="status" value="NOT_ANNOTATED_CDS"/>
    <property type="molecule type" value="Genomic_DNA"/>
</dbReference>
<dbReference type="EMBL" id="CH471112">
    <property type="protein sequence ID" value="EAW85344.1"/>
    <property type="molecule type" value="Genomic_DNA"/>
</dbReference>
<dbReference type="EMBL" id="BC029437">
    <property type="protein sequence ID" value="AAH29437.1"/>
    <property type="molecule type" value="mRNA"/>
</dbReference>
<dbReference type="CCDS" id="CCDS10507.1">
    <molecule id="P24855-1"/>
</dbReference>
<dbReference type="PIR" id="A38417">
    <property type="entry name" value="NDHU1"/>
</dbReference>
<dbReference type="RefSeq" id="NP_001338754.1">
    <molecule id="P24855-1"/>
    <property type="nucleotide sequence ID" value="NM_001351825.2"/>
</dbReference>
<dbReference type="RefSeq" id="NP_001374064.1">
    <molecule id="P24855-1"/>
    <property type="nucleotide sequence ID" value="NM_001387135.1"/>
</dbReference>
<dbReference type="RefSeq" id="NP_005214.2">
    <molecule id="P24855-1"/>
    <property type="nucleotide sequence ID" value="NM_005223.3"/>
</dbReference>
<dbReference type="RefSeq" id="XP_011520695.1">
    <property type="nucleotide sequence ID" value="XM_011522393.2"/>
</dbReference>
<dbReference type="RefSeq" id="XP_016878488.1">
    <property type="nucleotide sequence ID" value="XM_017022999.1"/>
</dbReference>
<dbReference type="RefSeq" id="XP_016878492.1">
    <property type="nucleotide sequence ID" value="XM_017023003.1"/>
</dbReference>
<dbReference type="RefSeq" id="XP_016878493.1">
    <property type="nucleotide sequence ID" value="XM_017023004.1"/>
</dbReference>
<dbReference type="RefSeq" id="XP_016878494.1">
    <property type="nucleotide sequence ID" value="XM_017023005.1"/>
</dbReference>
<dbReference type="RefSeq" id="XP_016878495.1">
    <property type="nucleotide sequence ID" value="XM_017023006.1"/>
</dbReference>
<dbReference type="RefSeq" id="XP_047289631.1">
    <molecule id="P24855-1"/>
    <property type="nucleotide sequence ID" value="XM_047433675.1"/>
</dbReference>
<dbReference type="RefSeq" id="XP_047289632.1">
    <molecule id="P24855-1"/>
    <property type="nucleotide sequence ID" value="XM_047433676.1"/>
</dbReference>
<dbReference type="RefSeq" id="XP_047289633.1">
    <molecule id="P24855-1"/>
    <property type="nucleotide sequence ID" value="XM_047433677.1"/>
</dbReference>
<dbReference type="RefSeq" id="XP_054235690.1">
    <molecule id="P24855-1"/>
    <property type="nucleotide sequence ID" value="XM_054379715.1"/>
</dbReference>
<dbReference type="RefSeq" id="XP_054235691.1">
    <molecule id="P24855-1"/>
    <property type="nucleotide sequence ID" value="XM_054379716.1"/>
</dbReference>
<dbReference type="RefSeq" id="XP_054235692.1">
    <molecule id="P24855-1"/>
    <property type="nucleotide sequence ID" value="XM_054379717.1"/>
</dbReference>
<dbReference type="PDB" id="4AWN">
    <property type="method" value="X-ray"/>
    <property type="resolution" value="1.95 A"/>
    <property type="chains" value="A=23-282"/>
</dbReference>
<dbReference type="PDBsum" id="4AWN"/>
<dbReference type="SMR" id="P24855"/>
<dbReference type="BioGRID" id="108112">
    <property type="interactions" value="3"/>
</dbReference>
<dbReference type="FunCoup" id="P24855">
    <property type="interactions" value="98"/>
</dbReference>
<dbReference type="STRING" id="9606.ENSP00000385905"/>
<dbReference type="BindingDB" id="P24855"/>
<dbReference type="ChEMBL" id="CHEMBL3351219"/>
<dbReference type="DrugBank" id="DB00003">
    <property type="generic name" value="Dornase alfa"/>
</dbReference>
<dbReference type="GlyConnect" id="2005">
    <property type="glycosylation" value="1 N-Linked glycan (1 site)"/>
</dbReference>
<dbReference type="GlyCosmos" id="P24855">
    <property type="glycosylation" value="2 sites, 1 glycan"/>
</dbReference>
<dbReference type="GlyGen" id="P24855">
    <property type="glycosylation" value="2 sites, 3 N-linked glycans (1 site)"/>
</dbReference>
<dbReference type="iPTMnet" id="P24855"/>
<dbReference type="PhosphoSitePlus" id="P24855"/>
<dbReference type="BioMuta" id="DNASE1"/>
<dbReference type="DMDM" id="118919"/>
<dbReference type="jPOST" id="P24855"/>
<dbReference type="MassIVE" id="P24855"/>
<dbReference type="PaxDb" id="9606-ENSP00000385905"/>
<dbReference type="PeptideAtlas" id="P24855"/>
<dbReference type="ProteomicsDB" id="5238"/>
<dbReference type="ProteomicsDB" id="54233">
    <molecule id="P24855-1"/>
</dbReference>
<dbReference type="Antibodypedia" id="10879">
    <property type="antibodies" value="285 antibodies from 32 providers"/>
</dbReference>
<dbReference type="DNASU" id="1773"/>
<dbReference type="Ensembl" id="ENST00000246949.10">
    <molecule id="P24855-1"/>
    <property type="protein sequence ID" value="ENSP00000246949.5"/>
    <property type="gene ID" value="ENSG00000213918.11"/>
</dbReference>
<dbReference type="Ensembl" id="ENST00000407479.5">
    <molecule id="P24855-1"/>
    <property type="protein sequence ID" value="ENSP00000385905.1"/>
    <property type="gene ID" value="ENSG00000213918.11"/>
</dbReference>
<dbReference type="GeneID" id="1773"/>
<dbReference type="KEGG" id="hsa:1773"/>
<dbReference type="MANE-Select" id="ENST00000246949.10">
    <property type="protein sequence ID" value="ENSP00000246949.5"/>
    <property type="RefSeq nucleotide sequence ID" value="NM_005223.4"/>
    <property type="RefSeq protein sequence ID" value="NP_005214.2"/>
</dbReference>
<dbReference type="UCSC" id="uc002cvr.4">
    <molecule id="P24855-1"/>
    <property type="organism name" value="human"/>
</dbReference>
<dbReference type="AGR" id="HGNC:2956"/>
<dbReference type="CTD" id="1773"/>
<dbReference type="DisGeNET" id="1773"/>
<dbReference type="GeneCards" id="DNASE1"/>
<dbReference type="HGNC" id="HGNC:2956">
    <property type="gene designation" value="DNASE1"/>
</dbReference>
<dbReference type="HPA" id="ENSG00000213918">
    <property type="expression patterns" value="Tissue enhanced (intestine, pancreas)"/>
</dbReference>
<dbReference type="MalaCards" id="DNASE1"/>
<dbReference type="MIM" id="125505">
    <property type="type" value="gene"/>
</dbReference>
<dbReference type="MIM" id="152700">
    <property type="type" value="phenotype"/>
</dbReference>
<dbReference type="neXtProt" id="NX_P24855"/>
<dbReference type="OpenTargets" id="ENSG00000213918"/>
<dbReference type="Orphanet" id="300345">
    <property type="disease" value="Autosomal systemic lupus erythematosus"/>
</dbReference>
<dbReference type="Orphanet" id="536">
    <property type="disease" value="Systemic lupus erythematosus"/>
</dbReference>
<dbReference type="PharmGKB" id="PA27427"/>
<dbReference type="VEuPathDB" id="HostDB:ENSG00000213918"/>
<dbReference type="eggNOG" id="ENOG502QQFT">
    <property type="taxonomic scope" value="Eukaryota"/>
</dbReference>
<dbReference type="GeneTree" id="ENSGT00950000182846"/>
<dbReference type="HOGENOM" id="CLU_043335_2_1_1"/>
<dbReference type="InParanoid" id="P24855"/>
<dbReference type="OMA" id="YHFVVSE"/>
<dbReference type="OrthoDB" id="10061407at2759"/>
<dbReference type="PAN-GO" id="P24855">
    <property type="GO annotations" value="4 GO annotations based on evolutionary models"/>
</dbReference>
<dbReference type="PhylomeDB" id="P24855"/>
<dbReference type="TreeFam" id="TF329541"/>
<dbReference type="BRENDA" id="3.1.21.1">
    <property type="organism ID" value="2681"/>
</dbReference>
<dbReference type="PathwayCommons" id="P24855"/>
<dbReference type="SignaLink" id="P24855"/>
<dbReference type="SIGNOR" id="P24855"/>
<dbReference type="BioGRID-ORCS" id="1773">
    <property type="hits" value="19 hits in 1162 CRISPR screens"/>
</dbReference>
<dbReference type="ChiTaRS" id="DNASE1">
    <property type="organism name" value="human"/>
</dbReference>
<dbReference type="GeneWiki" id="Deoxyribonuclease_I"/>
<dbReference type="GenomeRNAi" id="1773"/>
<dbReference type="Pharos" id="P24855">
    <property type="development level" value="Tchem"/>
</dbReference>
<dbReference type="PRO" id="PR:P24855"/>
<dbReference type="Proteomes" id="UP000005640">
    <property type="component" value="Chromosome 16"/>
</dbReference>
<dbReference type="RNAct" id="P24855">
    <property type="molecule type" value="protein"/>
</dbReference>
<dbReference type="Bgee" id="ENSG00000213918">
    <property type="expression patterns" value="Expressed in duodenum and 149 other cell types or tissues"/>
</dbReference>
<dbReference type="ExpressionAtlas" id="P24855">
    <property type="expression patterns" value="baseline and differential"/>
</dbReference>
<dbReference type="GO" id="GO:0070062">
    <property type="term" value="C:extracellular exosome"/>
    <property type="evidence" value="ECO:0007005"/>
    <property type="project" value="UniProtKB"/>
</dbReference>
<dbReference type="GO" id="GO:0005576">
    <property type="term" value="C:extracellular region"/>
    <property type="evidence" value="ECO:0000304"/>
    <property type="project" value="ProtInc"/>
</dbReference>
<dbReference type="GO" id="GO:0005635">
    <property type="term" value="C:nuclear envelope"/>
    <property type="evidence" value="ECO:0007669"/>
    <property type="project" value="UniProtKB-SubCell"/>
</dbReference>
<dbReference type="GO" id="GO:0005634">
    <property type="term" value="C:nucleus"/>
    <property type="evidence" value="ECO:0000318"/>
    <property type="project" value="GO_Central"/>
</dbReference>
<dbReference type="GO" id="GO:0042588">
    <property type="term" value="C:zymogen granule"/>
    <property type="evidence" value="ECO:0007669"/>
    <property type="project" value="UniProtKB-SubCell"/>
</dbReference>
<dbReference type="GO" id="GO:0003779">
    <property type="term" value="F:actin binding"/>
    <property type="evidence" value="ECO:0007669"/>
    <property type="project" value="UniProtKB-KW"/>
</dbReference>
<dbReference type="GO" id="GO:0004530">
    <property type="term" value="F:deoxyribonuclease I activity"/>
    <property type="evidence" value="ECO:0000318"/>
    <property type="project" value="GO_Central"/>
</dbReference>
<dbReference type="GO" id="GO:0003677">
    <property type="term" value="F:DNA binding"/>
    <property type="evidence" value="ECO:0000318"/>
    <property type="project" value="GO_Central"/>
</dbReference>
<dbReference type="GO" id="GO:0006915">
    <property type="term" value="P:apoptotic process"/>
    <property type="evidence" value="ECO:0007669"/>
    <property type="project" value="UniProtKB-KW"/>
</dbReference>
<dbReference type="GO" id="GO:0006308">
    <property type="term" value="P:DNA catabolic process"/>
    <property type="evidence" value="ECO:0000250"/>
    <property type="project" value="UniProtKB"/>
</dbReference>
<dbReference type="GO" id="GO:0002283">
    <property type="term" value="P:neutrophil activation involved in immune response"/>
    <property type="evidence" value="ECO:0000250"/>
    <property type="project" value="UniProtKB"/>
</dbReference>
<dbReference type="GO" id="GO:0002673">
    <property type="term" value="P:regulation of acute inflammatory response"/>
    <property type="evidence" value="ECO:0000250"/>
    <property type="project" value="UniProtKB"/>
</dbReference>
<dbReference type="GO" id="GO:0070948">
    <property type="term" value="P:regulation of neutrophil mediated cytotoxicity"/>
    <property type="evidence" value="ECO:0000250"/>
    <property type="project" value="UniProtKB"/>
</dbReference>
<dbReference type="CDD" id="cd10282">
    <property type="entry name" value="DNase1"/>
    <property type="match status" value="1"/>
</dbReference>
<dbReference type="FunFam" id="3.60.10.10:FF:000035">
    <property type="entry name" value="Deoxyribonuclease"/>
    <property type="match status" value="1"/>
</dbReference>
<dbReference type="Gene3D" id="3.60.10.10">
    <property type="entry name" value="Endonuclease/exonuclease/phosphatase"/>
    <property type="match status" value="1"/>
</dbReference>
<dbReference type="InterPro" id="IPR018057">
    <property type="entry name" value="Deoxyribonuclease-1_AS"/>
</dbReference>
<dbReference type="InterPro" id="IPR016202">
    <property type="entry name" value="DNase_I"/>
</dbReference>
<dbReference type="InterPro" id="IPR033125">
    <property type="entry name" value="DNASE_I_2"/>
</dbReference>
<dbReference type="InterPro" id="IPR036691">
    <property type="entry name" value="Endo/exonu/phosph_ase_sf"/>
</dbReference>
<dbReference type="InterPro" id="IPR005135">
    <property type="entry name" value="Endo/exonuclease/phosphatase"/>
</dbReference>
<dbReference type="PANTHER" id="PTHR11371">
    <property type="entry name" value="DEOXYRIBONUCLEASE"/>
    <property type="match status" value="1"/>
</dbReference>
<dbReference type="PANTHER" id="PTHR11371:SF27">
    <property type="entry name" value="DEOXYRIBONUCLEASE-1"/>
    <property type="match status" value="1"/>
</dbReference>
<dbReference type="Pfam" id="PF03372">
    <property type="entry name" value="Exo_endo_phos"/>
    <property type="match status" value="1"/>
</dbReference>
<dbReference type="PIRSF" id="PIRSF000988">
    <property type="entry name" value="DNase_I_euk"/>
    <property type="match status" value="1"/>
</dbReference>
<dbReference type="PRINTS" id="PR00130">
    <property type="entry name" value="DNASEI"/>
</dbReference>
<dbReference type="SMART" id="SM00476">
    <property type="entry name" value="DNaseIc"/>
    <property type="match status" value="1"/>
</dbReference>
<dbReference type="SUPFAM" id="SSF56219">
    <property type="entry name" value="DNase I-like"/>
    <property type="match status" value="1"/>
</dbReference>
<dbReference type="PROSITE" id="PS00919">
    <property type="entry name" value="DNASE_I_1"/>
    <property type="match status" value="1"/>
</dbReference>
<dbReference type="PROSITE" id="PS00918">
    <property type="entry name" value="DNASE_I_2"/>
    <property type="match status" value="1"/>
</dbReference>
<evidence type="ECO:0000250" key="1">
    <source>
        <dbReference type="UniProtKB" id="P00639"/>
    </source>
</evidence>
<evidence type="ECO:0000250" key="2">
    <source>
        <dbReference type="UniProtKB" id="P21704"/>
    </source>
</evidence>
<evidence type="ECO:0000250" key="3">
    <source>
        <dbReference type="UniProtKB" id="P49183"/>
    </source>
</evidence>
<evidence type="ECO:0000255" key="4"/>
<evidence type="ECO:0000269" key="5">
    <source>
    </source>
</evidence>
<evidence type="ECO:0000269" key="6">
    <source>
    </source>
</evidence>
<evidence type="ECO:0000269" key="7">
    <source>
    </source>
</evidence>
<evidence type="ECO:0000269" key="8">
    <source>
    </source>
</evidence>
<evidence type="ECO:0000269" key="9">
    <source>
    </source>
</evidence>
<evidence type="ECO:0000269" key="10">
    <source>
    </source>
</evidence>
<evidence type="ECO:0000269" key="11">
    <source>
    </source>
</evidence>
<evidence type="ECO:0000269" key="12">
    <source>
    </source>
</evidence>
<evidence type="ECO:0000269" key="13">
    <source>
    </source>
</evidence>
<evidence type="ECO:0000269" key="14">
    <source>
    </source>
</evidence>
<evidence type="ECO:0000269" key="15">
    <source>
    </source>
</evidence>
<evidence type="ECO:0000303" key="16">
    <source>
    </source>
</evidence>
<evidence type="ECO:0000305" key="17"/>
<evidence type="ECO:0000305" key="18">
    <source>
    </source>
</evidence>
<evidence type="ECO:0000312" key="19">
    <source>
        <dbReference type="HGNC" id="HGNC:2956"/>
    </source>
</evidence>
<evidence type="ECO:0007829" key="20">
    <source>
        <dbReference type="PDB" id="4AWN"/>
    </source>
</evidence>
<gene>
    <name evidence="19" type="primary">DNASE1</name>
    <name type="synonym">DNL1</name>
    <name type="synonym">DRNI</name>
</gene>
<keyword id="KW-0002">3D-structure</keyword>
<keyword id="KW-0009">Actin-binding</keyword>
<keyword id="KW-0025">Alternative splicing</keyword>
<keyword id="KW-0053">Apoptosis</keyword>
<keyword id="KW-0106">Calcium</keyword>
<keyword id="KW-0968">Cytoplasmic vesicle</keyword>
<keyword id="KW-0903">Direct protein sequencing</keyword>
<keyword id="KW-1015">Disulfide bond</keyword>
<keyword id="KW-0255">Endonuclease</keyword>
<keyword id="KW-0325">Glycoprotein</keyword>
<keyword id="KW-0378">Hydrolase</keyword>
<keyword id="KW-0540">Nuclease</keyword>
<keyword id="KW-0539">Nucleus</keyword>
<keyword id="KW-0582">Pharmaceutical</keyword>
<keyword id="KW-1267">Proteomics identification</keyword>
<keyword id="KW-1185">Reference proteome</keyword>
<keyword id="KW-0964">Secreted</keyword>
<keyword id="KW-0732">Signal</keyword>
<keyword id="KW-0772">Systemic lupus erythematosus</keyword>
<comment type="function">
    <text evidence="1 2 3 6 9 10">Serum endocuclease secreted into body fluids by a wide variety of exocrine and endocrine organs (PubMed:11241278, PubMed:2251263, PubMed:2277032). Expressed by non-hematopoietic tissues and preferentially cleaves protein-free DNA (By similarity). Among other functions, seems to be involved in cell death by apoptosis (PubMed:11241278). Binds specifically to G-actin and blocks actin polymerization (By similarity). Together with DNASE1L3, plays a key role in degrading neutrophil extracellular traps (NETs) (By similarity). NETs are mainly composed of DNA fibers and are released by neutrophils to bind pathogens during inflammation (By similarity). Degradation of intravascular NETs by DNASE1 and DNASE1L3 is required to prevent formation of clots that obstruct blood vessels and cause organ damage following inflammation (By similarity).</text>
</comment>
<comment type="catalytic activity">
    <reaction evidence="6 9 10">
        <text>Endonucleolytic cleavage to 5'-phosphodinucleotide and 5'-phosphooligonucleotide end-products.</text>
        <dbReference type="EC" id="3.1.21.1"/>
    </reaction>
</comment>
<comment type="cofactor">
    <cofactor evidence="6 10">
        <name>Ca(2+)</name>
        <dbReference type="ChEBI" id="CHEBI:29108"/>
    </cofactor>
    <cofactor evidence="6 10">
        <name>Mg(2+)</name>
        <dbReference type="ChEBI" id="CHEBI:18420"/>
    </cofactor>
    <text evidence="6 10">Divalent metal cations. Prefers Ca(2+) or Mg(2+).</text>
</comment>
<comment type="subcellular location">
    <subcellularLocation>
        <location evidence="10">Secreted</location>
    </subcellularLocation>
    <subcellularLocation>
        <location evidence="17">Zymogen granule</location>
    </subcellularLocation>
    <subcellularLocation>
        <location>Nucleus envelope</location>
    </subcellularLocation>
    <text>Secretory protein, stored in zymogen granules and found in the nuclear envelope.</text>
</comment>
<comment type="alternative products">
    <event type="alternative splicing"/>
    <isoform>
        <id>P24855-1</id>
        <name>1</name>
        <sequence type="displayed"/>
    </isoform>
    <isoform>
        <id>P24855-2</id>
        <name>2</name>
        <sequence type="described" ref="VSP_056974 VSP_056975 VSP_056976"/>
    </isoform>
</comment>
<comment type="tissue specificity">
    <text>Principally in tissues of the digestive system. Highest levels found in urine, but also relatively abundant in semen and saliva.</text>
</comment>
<comment type="polymorphism">
    <text evidence="5 12 14 15">At least 6 alleles of DNASE1 are known: DNASE1*1 to DNASE1*6. The sequence shown is that of DNASE1*2.</text>
</comment>
<comment type="disease" evidence="7 8">
    <disease id="DI-02648">
        <name>Systemic lupus erythematosus</name>
        <acronym>SLE</acronym>
        <description>A chronic, relapsing, inflammatory, and often febrile multisystemic disorder of connective tissue, characterized principally by involvement of the skin, joints, kidneys and serosal membranes. It is of unknown etiology, but is thought to represent a failure of the regulatory mechanisms of the autoimmune system. The disease is marked by a wide range of system dysfunctions, an elevated erythrocyte sedimentation rate, and the formation of LE cells in the blood or bone marrow.</description>
        <dbReference type="MIM" id="152700"/>
    </disease>
    <text evidence="8">Disease susceptibility is associated with variants affecting the gene represented in this entry. Neutrophil extracellular traps (NETs) are impaired in patients suffering from SLE (PubMed:20439745). NETs are mainly composed of DNA fibers and are released by neutrophils to bind pathogens during inflammation (PubMed:20439745).</text>
</comment>
<comment type="pharmaceutical">
    <text evidence="18">Available under the name Pulmozyme (Genentech). Used to reduce the viscosity of cystic fibrosis sputum by hydrolyzing the extracellular DNA released by degenerating leukocytes that accumulate in response to infection.</text>
</comment>
<comment type="similarity">
    <text evidence="17">Belongs to the DNase I family.</text>
</comment>
<comment type="online information" name="Pulmozyme">
    <link uri="https://www.pulmozyme.com/"/>
    <text>Clinical information on Pulmozyme</text>
</comment>
<comment type="online information" name="Wikipedia">
    <link uri="https://en.wikipedia.org/wiki/Deoxyribonuclease"/>
    <text>Deoxyribonuclease entry</text>
</comment>
<accession>P24855</accession>
<accession>B4DV35</accession>
<accession>Q14UU9</accession>
<accession>Q14UV0</accession>